<accession>B0K7G6</accession>
<evidence type="ECO:0000255" key="1">
    <source>
        <dbReference type="HAMAP-Rule" id="MF_00093"/>
    </source>
</evidence>
<reference key="1">
    <citation type="submission" date="2008-01" db="EMBL/GenBank/DDBJ databases">
        <title>Complete sequence of Thermoanaerobacter pseudethanolicus 39E.</title>
        <authorList>
            <person name="Copeland A."/>
            <person name="Lucas S."/>
            <person name="Lapidus A."/>
            <person name="Barry K."/>
            <person name="Glavina del Rio T."/>
            <person name="Dalin E."/>
            <person name="Tice H."/>
            <person name="Pitluck S."/>
            <person name="Bruce D."/>
            <person name="Goodwin L."/>
            <person name="Saunders E."/>
            <person name="Brettin T."/>
            <person name="Detter J.C."/>
            <person name="Han C."/>
            <person name="Schmutz J."/>
            <person name="Larimer F."/>
            <person name="Land M."/>
            <person name="Hauser L."/>
            <person name="Kyrpides N."/>
            <person name="Lykidis A."/>
            <person name="Hemme C."/>
            <person name="Fields M.W."/>
            <person name="He Z."/>
            <person name="Zhou J."/>
            <person name="Richardson P."/>
        </authorList>
    </citation>
    <scope>NUCLEOTIDE SEQUENCE [LARGE SCALE GENOMIC DNA]</scope>
    <source>
        <strain>ATCC 33223 / DSM 2355 / 39E</strain>
    </source>
</reference>
<name>RF1_THEP3</name>
<organism>
    <name type="scientific">Thermoanaerobacter pseudethanolicus (strain ATCC 33223 / 39E)</name>
    <name type="common">Clostridium thermohydrosulfuricum</name>
    <dbReference type="NCBI Taxonomy" id="340099"/>
    <lineage>
        <taxon>Bacteria</taxon>
        <taxon>Bacillati</taxon>
        <taxon>Bacillota</taxon>
        <taxon>Clostridia</taxon>
        <taxon>Thermoanaerobacterales</taxon>
        <taxon>Thermoanaerobacteraceae</taxon>
        <taxon>Thermoanaerobacter</taxon>
    </lineage>
</organism>
<sequence length="356" mass="40541">MIDKLQAIEDRYVDLSQKISDPNIISNVAEWRKYVKEHAAIEDIVLKYREYKKVLEDIEATKELLSSNDEELKEMAEEELSQLEEKKEKLLEEIKILLIPKDPNDEKNVIMEIRAGAGGEEAALFAHDLFRMYSMYAEKKGWKVEIMSSNETDIGGFKEVILNISGKGSYSRLKYESGVHRVQRVPTTEAGGRIHTSTATVAVLPEVEEVDVEINPNDIKIDVFRSGGHGGQSVNTTDSAVRVTHIPTGIVVTCQDERSQIQNRERALKILRAKLYEMALQEQQREIAETRKSQVGTGERSERIRTYNFPQGRVTDHRIGLTLYRLQEVLDGDLDEIIDALILNDQAEKLKNMNLN</sequence>
<gene>
    <name evidence="1" type="primary">prfA</name>
    <name type="ordered locus">Teth39_2109</name>
</gene>
<proteinExistence type="inferred from homology"/>
<feature type="chain" id="PRO_1000093516" description="Peptide chain release factor 1">
    <location>
        <begin position="1"/>
        <end position="356"/>
    </location>
</feature>
<feature type="modified residue" description="N5-methylglutamine" evidence="1">
    <location>
        <position position="232"/>
    </location>
</feature>
<keyword id="KW-0963">Cytoplasm</keyword>
<keyword id="KW-0488">Methylation</keyword>
<keyword id="KW-0648">Protein biosynthesis</keyword>
<keyword id="KW-1185">Reference proteome</keyword>
<dbReference type="EMBL" id="CP000924">
    <property type="protein sequence ID" value="ABY95732.1"/>
    <property type="molecule type" value="Genomic_DNA"/>
</dbReference>
<dbReference type="RefSeq" id="WP_012269765.1">
    <property type="nucleotide sequence ID" value="NC_010321.1"/>
</dbReference>
<dbReference type="SMR" id="B0K7G6"/>
<dbReference type="STRING" id="340099.Teth39_2109"/>
<dbReference type="KEGG" id="tpd:Teth39_2109"/>
<dbReference type="eggNOG" id="COG0216">
    <property type="taxonomic scope" value="Bacteria"/>
</dbReference>
<dbReference type="HOGENOM" id="CLU_036856_0_1_9"/>
<dbReference type="Proteomes" id="UP000002156">
    <property type="component" value="Chromosome"/>
</dbReference>
<dbReference type="GO" id="GO:0005737">
    <property type="term" value="C:cytoplasm"/>
    <property type="evidence" value="ECO:0007669"/>
    <property type="project" value="UniProtKB-SubCell"/>
</dbReference>
<dbReference type="GO" id="GO:0016149">
    <property type="term" value="F:translation release factor activity, codon specific"/>
    <property type="evidence" value="ECO:0007669"/>
    <property type="project" value="UniProtKB-UniRule"/>
</dbReference>
<dbReference type="FunFam" id="3.30.160.20:FF:000004">
    <property type="entry name" value="Peptide chain release factor 1"/>
    <property type="match status" value="1"/>
</dbReference>
<dbReference type="FunFam" id="3.30.70.1660:FF:000002">
    <property type="entry name" value="Peptide chain release factor 1"/>
    <property type="match status" value="1"/>
</dbReference>
<dbReference type="FunFam" id="3.30.70.1660:FF:000004">
    <property type="entry name" value="Peptide chain release factor 1"/>
    <property type="match status" value="1"/>
</dbReference>
<dbReference type="Gene3D" id="3.30.160.20">
    <property type="match status" value="1"/>
</dbReference>
<dbReference type="Gene3D" id="3.30.70.1660">
    <property type="match status" value="2"/>
</dbReference>
<dbReference type="Gene3D" id="6.10.140.1950">
    <property type="match status" value="1"/>
</dbReference>
<dbReference type="HAMAP" id="MF_00093">
    <property type="entry name" value="Rel_fac_1"/>
    <property type="match status" value="1"/>
</dbReference>
<dbReference type="InterPro" id="IPR005139">
    <property type="entry name" value="PCRF"/>
</dbReference>
<dbReference type="InterPro" id="IPR000352">
    <property type="entry name" value="Pep_chain_release_fac_I"/>
</dbReference>
<dbReference type="InterPro" id="IPR045853">
    <property type="entry name" value="Pep_chain_release_fac_I_sf"/>
</dbReference>
<dbReference type="InterPro" id="IPR050057">
    <property type="entry name" value="Prokaryotic/Mito_RF"/>
</dbReference>
<dbReference type="InterPro" id="IPR004373">
    <property type="entry name" value="RF-1"/>
</dbReference>
<dbReference type="NCBIfam" id="TIGR00019">
    <property type="entry name" value="prfA"/>
    <property type="match status" value="1"/>
</dbReference>
<dbReference type="NCBIfam" id="NF001859">
    <property type="entry name" value="PRK00591.1"/>
    <property type="match status" value="1"/>
</dbReference>
<dbReference type="PANTHER" id="PTHR43804">
    <property type="entry name" value="LD18447P"/>
    <property type="match status" value="1"/>
</dbReference>
<dbReference type="PANTHER" id="PTHR43804:SF7">
    <property type="entry name" value="LD18447P"/>
    <property type="match status" value="1"/>
</dbReference>
<dbReference type="Pfam" id="PF03462">
    <property type="entry name" value="PCRF"/>
    <property type="match status" value="1"/>
</dbReference>
<dbReference type="Pfam" id="PF00472">
    <property type="entry name" value="RF-1"/>
    <property type="match status" value="1"/>
</dbReference>
<dbReference type="SMART" id="SM00937">
    <property type="entry name" value="PCRF"/>
    <property type="match status" value="1"/>
</dbReference>
<dbReference type="SUPFAM" id="SSF75620">
    <property type="entry name" value="Release factor"/>
    <property type="match status" value="1"/>
</dbReference>
<dbReference type="PROSITE" id="PS00745">
    <property type="entry name" value="RF_PROK_I"/>
    <property type="match status" value="1"/>
</dbReference>
<protein>
    <recommendedName>
        <fullName evidence="1">Peptide chain release factor 1</fullName>
        <shortName evidence="1">RF-1</shortName>
    </recommendedName>
</protein>
<comment type="function">
    <text evidence="1">Peptide chain release factor 1 directs the termination of translation in response to the peptide chain termination codons UAG and UAA.</text>
</comment>
<comment type="subcellular location">
    <subcellularLocation>
        <location evidence="1">Cytoplasm</location>
    </subcellularLocation>
</comment>
<comment type="PTM">
    <text evidence="1">Methylated by PrmC. Methylation increases the termination efficiency of RF1.</text>
</comment>
<comment type="similarity">
    <text evidence="1">Belongs to the prokaryotic/mitochondrial release factor family.</text>
</comment>